<organism>
    <name type="scientific">Escherichia coli O157:H7</name>
    <dbReference type="NCBI Taxonomy" id="83334"/>
    <lineage>
        <taxon>Bacteria</taxon>
        <taxon>Pseudomonadati</taxon>
        <taxon>Pseudomonadota</taxon>
        <taxon>Gammaproteobacteria</taxon>
        <taxon>Enterobacterales</taxon>
        <taxon>Enterobacteriaceae</taxon>
        <taxon>Escherichia</taxon>
    </lineage>
</organism>
<comment type="catalytic activity">
    <reaction>
        <text>L-tryptophan + H2O = indole + pyruvate + NH4(+)</text>
        <dbReference type="Rhea" id="RHEA:19553"/>
        <dbReference type="ChEBI" id="CHEBI:15361"/>
        <dbReference type="ChEBI" id="CHEBI:15377"/>
        <dbReference type="ChEBI" id="CHEBI:16881"/>
        <dbReference type="ChEBI" id="CHEBI:28938"/>
        <dbReference type="ChEBI" id="CHEBI:57912"/>
        <dbReference type="EC" id="4.1.99.1"/>
    </reaction>
</comment>
<comment type="cofactor">
    <cofactor evidence="1">
        <name>pyridoxal 5'-phosphate</name>
        <dbReference type="ChEBI" id="CHEBI:597326"/>
    </cofactor>
</comment>
<comment type="pathway">
    <text>Amino-acid degradation; L-tryptophan degradation via pyruvate pathway; indole and pyruvate from L-tryptophan: step 1/1.</text>
</comment>
<comment type="subunit">
    <text evidence="1">Homotetramer.</text>
</comment>
<comment type="similarity">
    <text evidence="2">Belongs to the beta-eliminating lyase family.</text>
</comment>
<comment type="sequence caution" evidence="2">
    <conflict type="erroneous initiation">
        <sequence resource="EMBL-CDS" id="AAG58908"/>
    </conflict>
    <text>Extended N-terminus.</text>
</comment>
<evidence type="ECO:0000250" key="1"/>
<evidence type="ECO:0000305" key="2"/>
<feature type="chain" id="PRO_0000195612" description="Tryptophanase">
    <location>
        <begin position="1"/>
        <end position="471"/>
    </location>
</feature>
<feature type="modified residue" description="N6-acetyllysine" evidence="1">
    <location>
        <position position="5"/>
    </location>
</feature>
<feature type="modified residue" description="N6-acetyllysine" evidence="1">
    <location>
        <position position="115"/>
    </location>
</feature>
<feature type="modified residue" description="N6-acetyllysine" evidence="1">
    <location>
        <position position="156"/>
    </location>
</feature>
<feature type="modified residue" description="N6-(pyridoxal phosphate)lysine" evidence="1">
    <location>
        <position position="270"/>
    </location>
</feature>
<feature type="modified residue" description="N6-acetyllysine" evidence="1">
    <location>
        <position position="450"/>
    </location>
</feature>
<protein>
    <recommendedName>
        <fullName>Tryptophanase</fullName>
        <ecNumber>4.1.99.1</ecNumber>
    </recommendedName>
    <alternativeName>
        <fullName>L-tryptophan indole-lyase</fullName>
        <shortName>TNase</shortName>
    </alternativeName>
</protein>
<name>TNAA_ECO57</name>
<sequence>MENFKHLPEPFRIRVIEPVKRTTRAYREEAIIKSGMNPFLLDSEDVFIDLLTDSGTGAVTQSMQAAMMRGDEAYSGSRSYYALAESVKNIFGYQYTIPTHQGRGAEQIYIPVLIKKREQEKGLDRSKMVAFSNYFFDTTQGHSQINGCTVRNVYIKEAFDTGVRYDFKGNFDLEGLERGIEEVGPNNVPYIVATITSNSAGGQPVSLANLKAMYSIAKKYDIPVVMDSARFAENAYFIKQREAEYKDWTIEQITRETYKYADMLAMSAKKDAMVPMGGLLCMKDDSFFDVYTECRTLCVVQEGFPTYGGLEGGAMERLAVGLYDGMNLDWLAYRIAQVQYLVDGLEEIGVVCQQAGGHAAFVDAGKLLPHIPADQFPAQALACELYKVAGIRAVEIGSFLLGRDPKTGKQLPCPAELLRLTIPRATYTQTHMDFIIEAFKHVKENASNIKGLTFTYEPKVLRHFTAKLKEV</sequence>
<gene>
    <name type="primary">tnaA</name>
    <name type="ordered locus">Z5203</name>
    <name type="ordered locus">ECs4645</name>
</gene>
<keyword id="KW-0007">Acetylation</keyword>
<keyword id="KW-0456">Lyase</keyword>
<keyword id="KW-0663">Pyridoxal phosphate</keyword>
<keyword id="KW-1185">Reference proteome</keyword>
<keyword id="KW-0823">Tryptophan catabolism</keyword>
<accession>Q8XB34</accession>
<dbReference type="EC" id="4.1.99.1"/>
<dbReference type="EMBL" id="AE005174">
    <property type="protein sequence ID" value="AAG58908.1"/>
    <property type="status" value="ALT_INIT"/>
    <property type="molecule type" value="Genomic_DNA"/>
</dbReference>
<dbReference type="EMBL" id="BA000007">
    <property type="protein sequence ID" value="BAB38068.2"/>
    <property type="molecule type" value="Genomic_DNA"/>
</dbReference>
<dbReference type="PIR" id="E91209">
    <property type="entry name" value="E91209"/>
</dbReference>
<dbReference type="PIR" id="H86055">
    <property type="entry name" value="H86055"/>
</dbReference>
<dbReference type="RefSeq" id="NP_312672.2">
    <property type="nucleotide sequence ID" value="NC_002695.1"/>
</dbReference>
<dbReference type="RefSeq" id="WP_001302010.1">
    <property type="nucleotide sequence ID" value="NZ_VOAI01000011.1"/>
</dbReference>
<dbReference type="SMR" id="Q8XB34"/>
<dbReference type="STRING" id="155864.Z5203"/>
<dbReference type="GeneID" id="915393"/>
<dbReference type="KEGG" id="ece:Z5203"/>
<dbReference type="KEGG" id="ecs:ECs_4645"/>
<dbReference type="PATRIC" id="fig|386585.9.peg.4854"/>
<dbReference type="eggNOG" id="COG3033">
    <property type="taxonomic scope" value="Bacteria"/>
</dbReference>
<dbReference type="HOGENOM" id="CLU_047223_0_0_6"/>
<dbReference type="OMA" id="MTMSAKK"/>
<dbReference type="UniPathway" id="UPA00332">
    <property type="reaction ID" value="UER00452"/>
</dbReference>
<dbReference type="Proteomes" id="UP000000558">
    <property type="component" value="Chromosome"/>
</dbReference>
<dbReference type="Proteomes" id="UP000002519">
    <property type="component" value="Chromosome"/>
</dbReference>
<dbReference type="GO" id="GO:0009034">
    <property type="term" value="F:tryptophanase activity"/>
    <property type="evidence" value="ECO:0007669"/>
    <property type="project" value="UniProtKB-UniRule"/>
</dbReference>
<dbReference type="FunFam" id="3.40.640.10:FF:000039">
    <property type="entry name" value="Tryptophanase"/>
    <property type="match status" value="1"/>
</dbReference>
<dbReference type="Gene3D" id="3.90.1150.10">
    <property type="entry name" value="Aspartate Aminotransferase, domain 1"/>
    <property type="match status" value="1"/>
</dbReference>
<dbReference type="Gene3D" id="3.40.640.10">
    <property type="entry name" value="Type I PLP-dependent aspartate aminotransferase-like (Major domain)"/>
    <property type="match status" value="1"/>
</dbReference>
<dbReference type="HAMAP" id="MF_00544">
    <property type="entry name" value="Tryptophanase"/>
    <property type="match status" value="1"/>
</dbReference>
<dbReference type="InterPro" id="IPR001597">
    <property type="entry name" value="ArAA_b-elim_lyase/Thr_aldolase"/>
</dbReference>
<dbReference type="InterPro" id="IPR011166">
    <property type="entry name" value="Beta-eliminating_lyase"/>
</dbReference>
<dbReference type="InterPro" id="IPR015424">
    <property type="entry name" value="PyrdxlP-dep_Trfase"/>
</dbReference>
<dbReference type="InterPro" id="IPR015421">
    <property type="entry name" value="PyrdxlP-dep_Trfase_major"/>
</dbReference>
<dbReference type="InterPro" id="IPR015422">
    <property type="entry name" value="PyrdxlP-dep_Trfase_small"/>
</dbReference>
<dbReference type="InterPro" id="IPR013440">
    <property type="entry name" value="TNase"/>
</dbReference>
<dbReference type="InterPro" id="IPR018176">
    <property type="entry name" value="Tryptophanase_CS"/>
</dbReference>
<dbReference type="NCBIfam" id="NF009709">
    <property type="entry name" value="PRK13238.1"/>
    <property type="match status" value="1"/>
</dbReference>
<dbReference type="NCBIfam" id="TIGR02617">
    <property type="entry name" value="tnaA_trp_ase"/>
    <property type="match status" value="1"/>
</dbReference>
<dbReference type="PANTHER" id="PTHR32325">
    <property type="entry name" value="BETA-ELIMINATING LYASE-LIKE PROTEIN-RELATED"/>
    <property type="match status" value="1"/>
</dbReference>
<dbReference type="PANTHER" id="PTHR32325:SF4">
    <property type="entry name" value="TRYPTOPHANASE"/>
    <property type="match status" value="1"/>
</dbReference>
<dbReference type="Pfam" id="PF01212">
    <property type="entry name" value="Beta_elim_lyase"/>
    <property type="match status" value="1"/>
</dbReference>
<dbReference type="PIRSF" id="PIRSF001386">
    <property type="entry name" value="Trpase"/>
    <property type="match status" value="1"/>
</dbReference>
<dbReference type="SUPFAM" id="SSF53383">
    <property type="entry name" value="PLP-dependent transferases"/>
    <property type="match status" value="1"/>
</dbReference>
<dbReference type="PROSITE" id="PS00853">
    <property type="entry name" value="BETA_ELIM_LYASE"/>
    <property type="match status" value="1"/>
</dbReference>
<proteinExistence type="inferred from homology"/>
<reference key="1">
    <citation type="journal article" date="2001" name="Nature">
        <title>Genome sequence of enterohaemorrhagic Escherichia coli O157:H7.</title>
        <authorList>
            <person name="Perna N.T."/>
            <person name="Plunkett G. III"/>
            <person name="Burland V."/>
            <person name="Mau B."/>
            <person name="Glasner J.D."/>
            <person name="Rose D.J."/>
            <person name="Mayhew G.F."/>
            <person name="Evans P.S."/>
            <person name="Gregor J."/>
            <person name="Kirkpatrick H.A."/>
            <person name="Posfai G."/>
            <person name="Hackett J."/>
            <person name="Klink S."/>
            <person name="Boutin A."/>
            <person name="Shao Y."/>
            <person name="Miller L."/>
            <person name="Grotbeck E.J."/>
            <person name="Davis N.W."/>
            <person name="Lim A."/>
            <person name="Dimalanta E.T."/>
            <person name="Potamousis K."/>
            <person name="Apodaca J."/>
            <person name="Anantharaman T.S."/>
            <person name="Lin J."/>
            <person name="Yen G."/>
            <person name="Schwartz D.C."/>
            <person name="Welch R.A."/>
            <person name="Blattner F.R."/>
        </authorList>
    </citation>
    <scope>NUCLEOTIDE SEQUENCE [LARGE SCALE GENOMIC DNA]</scope>
    <source>
        <strain>O157:H7 / EDL933 / ATCC 700927 / EHEC</strain>
    </source>
</reference>
<reference key="2">
    <citation type="journal article" date="2001" name="DNA Res.">
        <title>Complete genome sequence of enterohemorrhagic Escherichia coli O157:H7 and genomic comparison with a laboratory strain K-12.</title>
        <authorList>
            <person name="Hayashi T."/>
            <person name="Makino K."/>
            <person name="Ohnishi M."/>
            <person name="Kurokawa K."/>
            <person name="Ishii K."/>
            <person name="Yokoyama K."/>
            <person name="Han C.-G."/>
            <person name="Ohtsubo E."/>
            <person name="Nakayama K."/>
            <person name="Murata T."/>
            <person name="Tanaka M."/>
            <person name="Tobe T."/>
            <person name="Iida T."/>
            <person name="Takami H."/>
            <person name="Honda T."/>
            <person name="Sasakawa C."/>
            <person name="Ogasawara N."/>
            <person name="Yasunaga T."/>
            <person name="Kuhara S."/>
            <person name="Shiba T."/>
            <person name="Hattori M."/>
            <person name="Shinagawa H."/>
        </authorList>
    </citation>
    <scope>NUCLEOTIDE SEQUENCE [LARGE SCALE GENOMIC DNA]</scope>
    <source>
        <strain>O157:H7 / Sakai / RIMD 0509952 / EHEC</strain>
    </source>
</reference>